<name>HIS2_PSEP7</name>
<proteinExistence type="inferred from homology"/>
<protein>
    <recommendedName>
        <fullName evidence="1">Phosphoribosyl-ATP pyrophosphatase</fullName>
        <shortName evidence="1">PRA-PH</shortName>
        <ecNumber evidence="1">3.6.1.31</ecNumber>
    </recommendedName>
</protein>
<feature type="chain" id="PRO_1000063368" description="Phosphoribosyl-ATP pyrophosphatase">
    <location>
        <begin position="1"/>
        <end position="111"/>
    </location>
</feature>
<comment type="catalytic activity">
    <reaction evidence="1">
        <text>1-(5-phospho-beta-D-ribosyl)-ATP + H2O = 1-(5-phospho-beta-D-ribosyl)-5'-AMP + diphosphate + H(+)</text>
        <dbReference type="Rhea" id="RHEA:22828"/>
        <dbReference type="ChEBI" id="CHEBI:15377"/>
        <dbReference type="ChEBI" id="CHEBI:15378"/>
        <dbReference type="ChEBI" id="CHEBI:33019"/>
        <dbReference type="ChEBI" id="CHEBI:59457"/>
        <dbReference type="ChEBI" id="CHEBI:73183"/>
        <dbReference type="EC" id="3.6.1.31"/>
    </reaction>
</comment>
<comment type="pathway">
    <text evidence="1">Amino-acid biosynthesis; L-histidine biosynthesis; L-histidine from 5-phospho-alpha-D-ribose 1-diphosphate: step 2/9.</text>
</comment>
<comment type="subcellular location">
    <subcellularLocation>
        <location evidence="1">Cytoplasm</location>
    </subcellularLocation>
</comment>
<comment type="similarity">
    <text evidence="1">Belongs to the PRA-PH family.</text>
</comment>
<sequence length="111" mass="12081">MSDTLTRLAAVLEERRNAAPDSSYVASLYHKGLNKILEKVGEESVETIIAAKDAAASGDCQELIYETADLWFHSLVMLSALGQHPQAVLDELERRFGLSGHAEKAARQPSA</sequence>
<gene>
    <name evidence="1" type="primary">hisE</name>
    <name type="ordered locus">PSPA7_5806</name>
</gene>
<accession>A6VDJ0</accession>
<reference key="1">
    <citation type="submission" date="2007-06" db="EMBL/GenBank/DDBJ databases">
        <authorList>
            <person name="Dodson R.J."/>
            <person name="Harkins D."/>
            <person name="Paulsen I.T."/>
        </authorList>
    </citation>
    <scope>NUCLEOTIDE SEQUENCE [LARGE SCALE GENOMIC DNA]</scope>
    <source>
        <strain>DSM 24068 / PA7</strain>
    </source>
</reference>
<dbReference type="EC" id="3.6.1.31" evidence="1"/>
<dbReference type="EMBL" id="CP000744">
    <property type="protein sequence ID" value="ABR82176.1"/>
    <property type="molecule type" value="Genomic_DNA"/>
</dbReference>
<dbReference type="RefSeq" id="WP_003155136.1">
    <property type="nucleotide sequence ID" value="NC_009656.1"/>
</dbReference>
<dbReference type="SMR" id="A6VDJ0"/>
<dbReference type="GeneID" id="77223604"/>
<dbReference type="KEGG" id="pap:PSPA7_5806"/>
<dbReference type="HOGENOM" id="CLU_123337_1_2_6"/>
<dbReference type="UniPathway" id="UPA00031">
    <property type="reaction ID" value="UER00007"/>
</dbReference>
<dbReference type="Proteomes" id="UP000001582">
    <property type="component" value="Chromosome"/>
</dbReference>
<dbReference type="GO" id="GO:0005737">
    <property type="term" value="C:cytoplasm"/>
    <property type="evidence" value="ECO:0007669"/>
    <property type="project" value="UniProtKB-SubCell"/>
</dbReference>
<dbReference type="GO" id="GO:0005524">
    <property type="term" value="F:ATP binding"/>
    <property type="evidence" value="ECO:0007669"/>
    <property type="project" value="UniProtKB-KW"/>
</dbReference>
<dbReference type="GO" id="GO:0004636">
    <property type="term" value="F:phosphoribosyl-ATP diphosphatase activity"/>
    <property type="evidence" value="ECO:0007669"/>
    <property type="project" value="UniProtKB-UniRule"/>
</dbReference>
<dbReference type="GO" id="GO:0000105">
    <property type="term" value="P:L-histidine biosynthetic process"/>
    <property type="evidence" value="ECO:0007669"/>
    <property type="project" value="UniProtKB-UniRule"/>
</dbReference>
<dbReference type="CDD" id="cd11534">
    <property type="entry name" value="NTP-PPase_HisIE_like"/>
    <property type="match status" value="1"/>
</dbReference>
<dbReference type="Gene3D" id="1.10.287.1080">
    <property type="entry name" value="MazG-like"/>
    <property type="match status" value="1"/>
</dbReference>
<dbReference type="HAMAP" id="MF_01020">
    <property type="entry name" value="HisE"/>
    <property type="match status" value="1"/>
</dbReference>
<dbReference type="InterPro" id="IPR008179">
    <property type="entry name" value="HisE"/>
</dbReference>
<dbReference type="InterPro" id="IPR021130">
    <property type="entry name" value="PRib-ATP_PPHydrolase-like"/>
</dbReference>
<dbReference type="NCBIfam" id="TIGR03188">
    <property type="entry name" value="histidine_hisI"/>
    <property type="match status" value="1"/>
</dbReference>
<dbReference type="NCBIfam" id="NF001611">
    <property type="entry name" value="PRK00400.1-3"/>
    <property type="match status" value="1"/>
</dbReference>
<dbReference type="PANTHER" id="PTHR42945">
    <property type="entry name" value="HISTIDINE BIOSYNTHESIS BIFUNCTIONAL PROTEIN"/>
    <property type="match status" value="1"/>
</dbReference>
<dbReference type="PANTHER" id="PTHR42945:SF9">
    <property type="entry name" value="HISTIDINE BIOSYNTHESIS BIFUNCTIONAL PROTEIN HISIE"/>
    <property type="match status" value="1"/>
</dbReference>
<dbReference type="Pfam" id="PF01503">
    <property type="entry name" value="PRA-PH"/>
    <property type="match status" value="1"/>
</dbReference>
<dbReference type="SUPFAM" id="SSF101386">
    <property type="entry name" value="all-alpha NTP pyrophosphatases"/>
    <property type="match status" value="1"/>
</dbReference>
<evidence type="ECO:0000255" key="1">
    <source>
        <dbReference type="HAMAP-Rule" id="MF_01020"/>
    </source>
</evidence>
<keyword id="KW-0028">Amino-acid biosynthesis</keyword>
<keyword id="KW-0067">ATP-binding</keyword>
<keyword id="KW-0963">Cytoplasm</keyword>
<keyword id="KW-0368">Histidine biosynthesis</keyword>
<keyword id="KW-0378">Hydrolase</keyword>
<keyword id="KW-0547">Nucleotide-binding</keyword>
<organism>
    <name type="scientific">Pseudomonas paraeruginosa (strain DSM 24068 / PA7)</name>
    <name type="common">Pseudomonas aeruginosa (strain PA7)</name>
    <dbReference type="NCBI Taxonomy" id="381754"/>
    <lineage>
        <taxon>Bacteria</taxon>
        <taxon>Pseudomonadati</taxon>
        <taxon>Pseudomonadota</taxon>
        <taxon>Gammaproteobacteria</taxon>
        <taxon>Pseudomonadales</taxon>
        <taxon>Pseudomonadaceae</taxon>
        <taxon>Pseudomonas</taxon>
        <taxon>Pseudomonas paraeruginosa</taxon>
    </lineage>
</organism>